<reference key="1">
    <citation type="journal article" date="2005" name="Proc. Natl. Acad. Sci. U.S.A.">
        <title>Comparison of the complete genome sequences of Pseudomonas syringae pv. syringae B728a and pv. tomato DC3000.</title>
        <authorList>
            <person name="Feil H."/>
            <person name="Feil W.S."/>
            <person name="Chain P."/>
            <person name="Larimer F."/>
            <person name="Dibartolo G."/>
            <person name="Copeland A."/>
            <person name="Lykidis A."/>
            <person name="Trong S."/>
            <person name="Nolan M."/>
            <person name="Goltsman E."/>
            <person name="Thiel J."/>
            <person name="Malfatti S."/>
            <person name="Loper J.E."/>
            <person name="Lapidus A."/>
            <person name="Detter J.C."/>
            <person name="Land M."/>
            <person name="Richardson P.M."/>
            <person name="Kyrpides N.C."/>
            <person name="Ivanova N."/>
            <person name="Lindow S.E."/>
        </authorList>
    </citation>
    <scope>NUCLEOTIDE SEQUENCE [LARGE SCALE GENOMIC DNA]</scope>
    <source>
        <strain>B728a</strain>
    </source>
</reference>
<keyword id="KW-0997">Cell inner membrane</keyword>
<keyword id="KW-1003">Cell membrane</keyword>
<keyword id="KW-0342">GTP-binding</keyword>
<keyword id="KW-0378">Hydrolase</keyword>
<keyword id="KW-0472">Membrane</keyword>
<keyword id="KW-0547">Nucleotide-binding</keyword>
<keyword id="KW-0648">Protein biosynthesis</keyword>
<sequence length="598" mass="66245">MSDLSHIRNFSIIAHIDHGKSTLADRFIQMCGGLTEREMEAQVLDSMDLERERGITIKAHSVTLYYKAKDGITYQLNFIDTPGHVDFTYEVSRSLAACEGALLVVDAGQGVEAQSVANCYTAIEQGLEVMPVLNKMDLPQADPDRVKEEIEKIIGIDATDAVACSAKSGMGVDEVLERLVATIPAPTGNIEDPLQALIIDSWFDNYLGVVSLVRVRHGRVKKGDKILVKSTGKLHLVDSVGVFNPKHSATVDLKAGEVGFIIAGIKDIHGAPVGDTLTLSTTPDVDVLPGFKRIQPQVYAGLFPVSSDDFEDFREALQKLTLNDSSLQYLPESSDALGFGFRCGFLGMLHMEIIQERLEREYNLDLITTAPTVIFELLLKTGETIYVDNPSKLPDLSAIEDMREPIVRANILVPQEHLGNVITLCIEKRGVQHDMLFLGTQVQVSYDLPMNEVVLDFFDRLKSVSRGYASLDYHFDRYQSANLVKLDVLINAEKVDALALIVHRDNAHYKGRALTEKMKELIPRQMFDVAIQAAIGGQIVARTTVKALRKNVLAKCYGGDVSRKRKLLEKQKAGKKRMKQVGNVEIPQEAFLAVLRLE</sequence>
<evidence type="ECO:0000255" key="1">
    <source>
        <dbReference type="HAMAP-Rule" id="MF_00071"/>
    </source>
</evidence>
<gene>
    <name evidence="1" type="primary">lepA</name>
    <name type="ordered locus">Psyr_3954</name>
</gene>
<dbReference type="EC" id="3.6.5.n1" evidence="1"/>
<dbReference type="EMBL" id="CP000075">
    <property type="protein sequence ID" value="AAY38984.1"/>
    <property type="molecule type" value="Genomic_DNA"/>
</dbReference>
<dbReference type="RefSeq" id="WP_003413009.1">
    <property type="nucleotide sequence ID" value="NC_007005.1"/>
</dbReference>
<dbReference type="RefSeq" id="YP_237022.1">
    <property type="nucleotide sequence ID" value="NC_007005.1"/>
</dbReference>
<dbReference type="SMR" id="Q4ZPD8"/>
<dbReference type="STRING" id="205918.Psyr_3954"/>
<dbReference type="GeneID" id="77279808"/>
<dbReference type="KEGG" id="psb:Psyr_3954"/>
<dbReference type="PATRIC" id="fig|205918.7.peg.4071"/>
<dbReference type="eggNOG" id="COG0481">
    <property type="taxonomic scope" value="Bacteria"/>
</dbReference>
<dbReference type="HOGENOM" id="CLU_009995_3_3_6"/>
<dbReference type="OrthoDB" id="9801472at2"/>
<dbReference type="Proteomes" id="UP000000426">
    <property type="component" value="Chromosome"/>
</dbReference>
<dbReference type="GO" id="GO:0005886">
    <property type="term" value="C:plasma membrane"/>
    <property type="evidence" value="ECO:0007669"/>
    <property type="project" value="UniProtKB-SubCell"/>
</dbReference>
<dbReference type="GO" id="GO:0005525">
    <property type="term" value="F:GTP binding"/>
    <property type="evidence" value="ECO:0007669"/>
    <property type="project" value="UniProtKB-UniRule"/>
</dbReference>
<dbReference type="GO" id="GO:0003924">
    <property type="term" value="F:GTPase activity"/>
    <property type="evidence" value="ECO:0007669"/>
    <property type="project" value="UniProtKB-UniRule"/>
</dbReference>
<dbReference type="GO" id="GO:0097216">
    <property type="term" value="F:guanosine tetraphosphate binding"/>
    <property type="evidence" value="ECO:0007669"/>
    <property type="project" value="UniProtKB-ARBA"/>
</dbReference>
<dbReference type="GO" id="GO:0043022">
    <property type="term" value="F:ribosome binding"/>
    <property type="evidence" value="ECO:0007669"/>
    <property type="project" value="UniProtKB-UniRule"/>
</dbReference>
<dbReference type="GO" id="GO:0003746">
    <property type="term" value="F:translation elongation factor activity"/>
    <property type="evidence" value="ECO:0007669"/>
    <property type="project" value="UniProtKB-UniRule"/>
</dbReference>
<dbReference type="GO" id="GO:0045727">
    <property type="term" value="P:positive regulation of translation"/>
    <property type="evidence" value="ECO:0007669"/>
    <property type="project" value="UniProtKB-UniRule"/>
</dbReference>
<dbReference type="CDD" id="cd03699">
    <property type="entry name" value="EF4_II"/>
    <property type="match status" value="1"/>
</dbReference>
<dbReference type="CDD" id="cd16260">
    <property type="entry name" value="EF4_III"/>
    <property type="match status" value="1"/>
</dbReference>
<dbReference type="CDD" id="cd01890">
    <property type="entry name" value="LepA"/>
    <property type="match status" value="1"/>
</dbReference>
<dbReference type="CDD" id="cd03709">
    <property type="entry name" value="lepA_C"/>
    <property type="match status" value="1"/>
</dbReference>
<dbReference type="FunFam" id="3.40.50.300:FF:000078">
    <property type="entry name" value="Elongation factor 4"/>
    <property type="match status" value="1"/>
</dbReference>
<dbReference type="FunFam" id="2.40.30.10:FF:000015">
    <property type="entry name" value="Translation factor GUF1, mitochondrial"/>
    <property type="match status" value="1"/>
</dbReference>
<dbReference type="FunFam" id="3.30.70.240:FF:000007">
    <property type="entry name" value="Translation factor GUF1, mitochondrial"/>
    <property type="match status" value="1"/>
</dbReference>
<dbReference type="FunFam" id="3.30.70.2570:FF:000001">
    <property type="entry name" value="Translation factor GUF1, mitochondrial"/>
    <property type="match status" value="1"/>
</dbReference>
<dbReference type="FunFam" id="3.30.70.870:FF:000004">
    <property type="entry name" value="Translation factor GUF1, mitochondrial"/>
    <property type="match status" value="1"/>
</dbReference>
<dbReference type="Gene3D" id="3.30.70.240">
    <property type="match status" value="1"/>
</dbReference>
<dbReference type="Gene3D" id="3.30.70.2570">
    <property type="entry name" value="Elongation factor 4, C-terminal domain"/>
    <property type="match status" value="1"/>
</dbReference>
<dbReference type="Gene3D" id="3.30.70.870">
    <property type="entry name" value="Elongation Factor G (Translational Gtpase), domain 3"/>
    <property type="match status" value="1"/>
</dbReference>
<dbReference type="Gene3D" id="3.40.50.300">
    <property type="entry name" value="P-loop containing nucleotide triphosphate hydrolases"/>
    <property type="match status" value="1"/>
</dbReference>
<dbReference type="Gene3D" id="2.40.30.10">
    <property type="entry name" value="Translation factors"/>
    <property type="match status" value="1"/>
</dbReference>
<dbReference type="HAMAP" id="MF_00071">
    <property type="entry name" value="LepA"/>
    <property type="match status" value="1"/>
</dbReference>
<dbReference type="InterPro" id="IPR006297">
    <property type="entry name" value="EF-4"/>
</dbReference>
<dbReference type="InterPro" id="IPR035647">
    <property type="entry name" value="EFG_III/V"/>
</dbReference>
<dbReference type="InterPro" id="IPR000640">
    <property type="entry name" value="EFG_V-like"/>
</dbReference>
<dbReference type="InterPro" id="IPR004161">
    <property type="entry name" value="EFTu-like_2"/>
</dbReference>
<dbReference type="InterPro" id="IPR038363">
    <property type="entry name" value="LepA_C_sf"/>
</dbReference>
<dbReference type="InterPro" id="IPR013842">
    <property type="entry name" value="LepA_CTD"/>
</dbReference>
<dbReference type="InterPro" id="IPR035654">
    <property type="entry name" value="LepA_IV"/>
</dbReference>
<dbReference type="InterPro" id="IPR027417">
    <property type="entry name" value="P-loop_NTPase"/>
</dbReference>
<dbReference type="InterPro" id="IPR005225">
    <property type="entry name" value="Small_GTP-bd"/>
</dbReference>
<dbReference type="InterPro" id="IPR000795">
    <property type="entry name" value="T_Tr_GTP-bd_dom"/>
</dbReference>
<dbReference type="NCBIfam" id="TIGR01393">
    <property type="entry name" value="lepA"/>
    <property type="match status" value="1"/>
</dbReference>
<dbReference type="NCBIfam" id="TIGR00231">
    <property type="entry name" value="small_GTP"/>
    <property type="match status" value="1"/>
</dbReference>
<dbReference type="PANTHER" id="PTHR43512:SF4">
    <property type="entry name" value="TRANSLATION FACTOR GUF1 HOMOLOG, CHLOROPLASTIC"/>
    <property type="match status" value="1"/>
</dbReference>
<dbReference type="PANTHER" id="PTHR43512">
    <property type="entry name" value="TRANSLATION FACTOR GUF1-RELATED"/>
    <property type="match status" value="1"/>
</dbReference>
<dbReference type="Pfam" id="PF00679">
    <property type="entry name" value="EFG_C"/>
    <property type="match status" value="1"/>
</dbReference>
<dbReference type="Pfam" id="PF00009">
    <property type="entry name" value="GTP_EFTU"/>
    <property type="match status" value="1"/>
</dbReference>
<dbReference type="Pfam" id="PF03144">
    <property type="entry name" value="GTP_EFTU_D2"/>
    <property type="match status" value="1"/>
</dbReference>
<dbReference type="Pfam" id="PF06421">
    <property type="entry name" value="LepA_C"/>
    <property type="match status" value="1"/>
</dbReference>
<dbReference type="PRINTS" id="PR00315">
    <property type="entry name" value="ELONGATNFCT"/>
</dbReference>
<dbReference type="SUPFAM" id="SSF54980">
    <property type="entry name" value="EF-G C-terminal domain-like"/>
    <property type="match status" value="2"/>
</dbReference>
<dbReference type="SUPFAM" id="SSF52540">
    <property type="entry name" value="P-loop containing nucleoside triphosphate hydrolases"/>
    <property type="match status" value="1"/>
</dbReference>
<dbReference type="PROSITE" id="PS51722">
    <property type="entry name" value="G_TR_2"/>
    <property type="match status" value="1"/>
</dbReference>
<name>LEPA_PSEU2</name>
<protein>
    <recommendedName>
        <fullName evidence="1">Elongation factor 4</fullName>
        <shortName evidence="1">EF-4</shortName>
        <ecNumber evidence="1">3.6.5.n1</ecNumber>
    </recommendedName>
    <alternativeName>
        <fullName evidence="1">Ribosomal back-translocase LepA</fullName>
    </alternativeName>
</protein>
<organism>
    <name type="scientific">Pseudomonas syringae pv. syringae (strain B728a)</name>
    <dbReference type="NCBI Taxonomy" id="205918"/>
    <lineage>
        <taxon>Bacteria</taxon>
        <taxon>Pseudomonadati</taxon>
        <taxon>Pseudomonadota</taxon>
        <taxon>Gammaproteobacteria</taxon>
        <taxon>Pseudomonadales</taxon>
        <taxon>Pseudomonadaceae</taxon>
        <taxon>Pseudomonas</taxon>
        <taxon>Pseudomonas syringae</taxon>
    </lineage>
</organism>
<feature type="chain" id="PRO_0000224787" description="Elongation factor 4">
    <location>
        <begin position="1"/>
        <end position="598"/>
    </location>
</feature>
<feature type="domain" description="tr-type G">
    <location>
        <begin position="5"/>
        <end position="187"/>
    </location>
</feature>
<feature type="binding site" evidence="1">
    <location>
        <begin position="17"/>
        <end position="22"/>
    </location>
    <ligand>
        <name>GTP</name>
        <dbReference type="ChEBI" id="CHEBI:37565"/>
    </ligand>
</feature>
<feature type="binding site" evidence="1">
    <location>
        <begin position="134"/>
        <end position="137"/>
    </location>
    <ligand>
        <name>GTP</name>
        <dbReference type="ChEBI" id="CHEBI:37565"/>
    </ligand>
</feature>
<proteinExistence type="inferred from homology"/>
<accession>Q4ZPD8</accession>
<comment type="function">
    <text evidence="1">Required for accurate and efficient protein synthesis under certain stress conditions. May act as a fidelity factor of the translation reaction, by catalyzing a one-codon backward translocation of tRNAs on improperly translocated ribosomes. Back-translocation proceeds from a post-translocation (POST) complex to a pre-translocation (PRE) complex, thus giving elongation factor G a second chance to translocate the tRNAs correctly. Binds to ribosomes in a GTP-dependent manner.</text>
</comment>
<comment type="catalytic activity">
    <reaction evidence="1">
        <text>GTP + H2O = GDP + phosphate + H(+)</text>
        <dbReference type="Rhea" id="RHEA:19669"/>
        <dbReference type="ChEBI" id="CHEBI:15377"/>
        <dbReference type="ChEBI" id="CHEBI:15378"/>
        <dbReference type="ChEBI" id="CHEBI:37565"/>
        <dbReference type="ChEBI" id="CHEBI:43474"/>
        <dbReference type="ChEBI" id="CHEBI:58189"/>
        <dbReference type="EC" id="3.6.5.n1"/>
    </reaction>
</comment>
<comment type="subcellular location">
    <subcellularLocation>
        <location evidence="1">Cell inner membrane</location>
        <topology evidence="1">Peripheral membrane protein</topology>
        <orientation evidence="1">Cytoplasmic side</orientation>
    </subcellularLocation>
</comment>
<comment type="similarity">
    <text evidence="1">Belongs to the TRAFAC class translation factor GTPase superfamily. Classic translation factor GTPase family. LepA subfamily.</text>
</comment>